<organism>
    <name type="scientific">Homo sapiens</name>
    <name type="common">Human</name>
    <dbReference type="NCBI Taxonomy" id="9606"/>
    <lineage>
        <taxon>Eukaryota</taxon>
        <taxon>Metazoa</taxon>
        <taxon>Chordata</taxon>
        <taxon>Craniata</taxon>
        <taxon>Vertebrata</taxon>
        <taxon>Euteleostomi</taxon>
        <taxon>Mammalia</taxon>
        <taxon>Eutheria</taxon>
        <taxon>Euarchontoglires</taxon>
        <taxon>Primates</taxon>
        <taxon>Haplorrhini</taxon>
        <taxon>Catarrhini</taxon>
        <taxon>Hominidae</taxon>
        <taxon>Homo</taxon>
    </lineage>
</organism>
<accession>Q13002</accession>
<accession>A6NMY9</accession>
<accession>B5MCV0</accession>
<accession>D7RWZ3</accession>
<accession>D7RWZ4</accession>
<accession>D7RWZ5</accession>
<accession>D7RWZ6</accession>
<accession>D7RWZ7</accession>
<accession>Q8WWS1</accession>
<accession>Q96KS6</accession>
<accession>Q96KS7</accession>
<accession>Q96KS8</accession>
<keyword id="KW-0002">3D-structure</keyword>
<keyword id="KW-0025">Alternative splicing</keyword>
<keyword id="KW-1003">Cell membrane</keyword>
<keyword id="KW-0225">Disease variant</keyword>
<keyword id="KW-1015">Disulfide bond</keyword>
<keyword id="KW-0887">Epilepsy</keyword>
<keyword id="KW-0325">Glycoprotein</keyword>
<keyword id="KW-0991">Intellectual disability</keyword>
<keyword id="KW-0407">Ion channel</keyword>
<keyword id="KW-0406">Ion transport</keyword>
<keyword id="KW-1017">Isopeptide bond</keyword>
<keyword id="KW-1071">Ligand-gated ion channel</keyword>
<keyword id="KW-0472">Membrane</keyword>
<keyword id="KW-0597">Phosphoprotein</keyword>
<keyword id="KW-0628">Postsynaptic cell membrane</keyword>
<keyword id="KW-1267">Proteomics identification</keyword>
<keyword id="KW-0675">Receptor</keyword>
<keyword id="KW-1185">Reference proteome</keyword>
<keyword id="KW-0691">RNA editing</keyword>
<keyword id="KW-0732">Signal</keyword>
<keyword id="KW-0770">Synapse</keyword>
<keyword id="KW-0812">Transmembrane</keyword>
<keyword id="KW-1133">Transmembrane helix</keyword>
<keyword id="KW-0813">Transport</keyword>
<keyword id="KW-0832">Ubl conjugation</keyword>
<name>GRIK2_HUMAN</name>
<reference key="1">
    <citation type="journal article" date="1994" name="Recept. Channels">
        <title>Functional expression and pharmacological characterization of the human EAA4 (GluR6) glutamate receptor: a kainate selective channel subunit.</title>
        <authorList>
            <person name="Hoo K.H."/>
            <person name="Nutt S.L."/>
            <person name="Fletcher E.J."/>
            <person name="Elliott C.E."/>
            <person name="Korczak B."/>
            <person name="Deverill R.M."/>
            <person name="Rampersad V."/>
            <person name="Fantaske R.P."/>
            <person name="Kamboj R.K."/>
        </authorList>
    </citation>
    <scope>NUCLEOTIDE SEQUENCE [MRNA] (ISOFORM 1)</scope>
    <scope>FUNCTION</scope>
    <scope>TRANSPORTER ACTIVITY</scope>
    <source>
        <tissue>Fetal brain</tissue>
    </source>
</reference>
<reference key="2">
    <citation type="journal article" date="1994" name="Genomics">
        <title>Human GluR6 kainate receptor (GRIK2): molecular cloning, expression, polymorphism, and chromosomal assignment.</title>
        <authorList>
            <person name="Paschen W."/>
            <person name="Blackstone C.D."/>
            <person name="Huganir R.L."/>
            <person name="Ross C.A."/>
        </authorList>
    </citation>
    <scope>NUCLEOTIDE SEQUENCE [MRNA] (ISOFORM 1)</scope>
</reference>
<reference key="3">
    <citation type="submission" date="2000-01" db="EMBL/GenBank/DDBJ databases">
        <title>Myeloid progenitor cell growth and apoptosis involves know and cell-specific ionotropic glutamate receptor.</title>
        <authorList>
            <person name="Langer A."/>
            <person name="Xu D."/>
            <person name="Kuehcke K."/>
            <person name="Fehse B."/>
            <person name="Abdallah S."/>
            <person name="Lother H."/>
        </authorList>
    </citation>
    <scope>NUCLEOTIDE SEQUENCE [MRNA] (ISOFORM 5)</scope>
</reference>
<reference key="4">
    <citation type="journal article" date="2001" name="Gene">
        <title>Genomic organization of the human GRIK2 gene and characterization of multiple splicing variants.</title>
        <authorList>
            <person name="Barbon A."/>
            <person name="Vallini I."/>
            <person name="Barlati S."/>
        </authorList>
    </citation>
    <scope>NUCLEOTIDE SEQUENCE [MRNA] (ISOFORMS 2; 3 AND 4)</scope>
    <scope>GENE ORGANIZATION</scope>
</reference>
<reference key="5">
    <citation type="journal article" date="2010" name="Gene">
        <title>Novel spliced variants of ionotropic glutamate receptor GluR6 in normal human fibroblast and brain cells are transcribed by tissue specific promoters.</title>
        <authorList>
            <person name="Zhawar V.K."/>
            <person name="Kaur G."/>
            <person name="deRiel J.K."/>
            <person name="Kaur G.P."/>
            <person name="Kandpal R.P."/>
            <person name="Athwal R.S."/>
        </authorList>
    </citation>
    <scope>NUCLEOTIDE SEQUENCE [MRNA] (ISOFORMS 1; 2; 5; 6 AND 7)</scope>
    <scope>ALTERNATIVE SPLICING</scope>
    <scope>TISSUE SPECIFICITY</scope>
    <source>
        <tissue>Brain</tissue>
    </source>
</reference>
<reference key="6">
    <citation type="journal article" date="2003" name="Nature">
        <title>The DNA sequence and analysis of human chromosome 6.</title>
        <authorList>
            <person name="Mungall A.J."/>
            <person name="Palmer S.A."/>
            <person name="Sims S.K."/>
            <person name="Edwards C.A."/>
            <person name="Ashurst J.L."/>
            <person name="Wilming L."/>
            <person name="Jones M.C."/>
            <person name="Horton R."/>
            <person name="Hunt S.E."/>
            <person name="Scott C.E."/>
            <person name="Gilbert J.G.R."/>
            <person name="Clamp M.E."/>
            <person name="Bethel G."/>
            <person name="Milne S."/>
            <person name="Ainscough R."/>
            <person name="Almeida J.P."/>
            <person name="Ambrose K.D."/>
            <person name="Andrews T.D."/>
            <person name="Ashwell R.I.S."/>
            <person name="Babbage A.K."/>
            <person name="Bagguley C.L."/>
            <person name="Bailey J."/>
            <person name="Banerjee R."/>
            <person name="Barker D.J."/>
            <person name="Barlow K.F."/>
            <person name="Bates K."/>
            <person name="Beare D.M."/>
            <person name="Beasley H."/>
            <person name="Beasley O."/>
            <person name="Bird C.P."/>
            <person name="Blakey S.E."/>
            <person name="Bray-Allen S."/>
            <person name="Brook J."/>
            <person name="Brown A.J."/>
            <person name="Brown J.Y."/>
            <person name="Burford D.C."/>
            <person name="Burrill W."/>
            <person name="Burton J."/>
            <person name="Carder C."/>
            <person name="Carter N.P."/>
            <person name="Chapman J.C."/>
            <person name="Clark S.Y."/>
            <person name="Clark G."/>
            <person name="Clee C.M."/>
            <person name="Clegg S."/>
            <person name="Cobley V."/>
            <person name="Collier R.E."/>
            <person name="Collins J.E."/>
            <person name="Colman L.K."/>
            <person name="Corby N.R."/>
            <person name="Coville G.J."/>
            <person name="Culley K.M."/>
            <person name="Dhami P."/>
            <person name="Davies J."/>
            <person name="Dunn M."/>
            <person name="Earthrowl M.E."/>
            <person name="Ellington A.E."/>
            <person name="Evans K.A."/>
            <person name="Faulkner L."/>
            <person name="Francis M.D."/>
            <person name="Frankish A."/>
            <person name="Frankland J."/>
            <person name="French L."/>
            <person name="Garner P."/>
            <person name="Garnett J."/>
            <person name="Ghori M.J."/>
            <person name="Gilby L.M."/>
            <person name="Gillson C.J."/>
            <person name="Glithero R.J."/>
            <person name="Grafham D.V."/>
            <person name="Grant M."/>
            <person name="Gribble S."/>
            <person name="Griffiths C."/>
            <person name="Griffiths M.N.D."/>
            <person name="Hall R."/>
            <person name="Halls K.S."/>
            <person name="Hammond S."/>
            <person name="Harley J.L."/>
            <person name="Hart E.A."/>
            <person name="Heath P.D."/>
            <person name="Heathcott R."/>
            <person name="Holmes S.J."/>
            <person name="Howden P.J."/>
            <person name="Howe K.L."/>
            <person name="Howell G.R."/>
            <person name="Huckle E."/>
            <person name="Humphray S.J."/>
            <person name="Humphries M.D."/>
            <person name="Hunt A.R."/>
            <person name="Johnson C.M."/>
            <person name="Joy A.A."/>
            <person name="Kay M."/>
            <person name="Keenan S.J."/>
            <person name="Kimberley A.M."/>
            <person name="King A."/>
            <person name="Laird G.K."/>
            <person name="Langford C."/>
            <person name="Lawlor S."/>
            <person name="Leongamornlert D.A."/>
            <person name="Leversha M."/>
            <person name="Lloyd C.R."/>
            <person name="Lloyd D.M."/>
            <person name="Loveland J.E."/>
            <person name="Lovell J."/>
            <person name="Martin S."/>
            <person name="Mashreghi-Mohammadi M."/>
            <person name="Maslen G.L."/>
            <person name="Matthews L."/>
            <person name="McCann O.T."/>
            <person name="McLaren S.J."/>
            <person name="McLay K."/>
            <person name="McMurray A."/>
            <person name="Moore M.J.F."/>
            <person name="Mullikin J.C."/>
            <person name="Niblett D."/>
            <person name="Nickerson T."/>
            <person name="Novik K.L."/>
            <person name="Oliver K."/>
            <person name="Overton-Larty E.K."/>
            <person name="Parker A."/>
            <person name="Patel R."/>
            <person name="Pearce A.V."/>
            <person name="Peck A.I."/>
            <person name="Phillimore B.J.C.T."/>
            <person name="Phillips S."/>
            <person name="Plumb R.W."/>
            <person name="Porter K.M."/>
            <person name="Ramsey Y."/>
            <person name="Ranby S.A."/>
            <person name="Rice C.M."/>
            <person name="Ross M.T."/>
            <person name="Searle S.M."/>
            <person name="Sehra H.K."/>
            <person name="Sheridan E."/>
            <person name="Skuce C.D."/>
            <person name="Smith S."/>
            <person name="Smith M."/>
            <person name="Spraggon L."/>
            <person name="Squares S.L."/>
            <person name="Steward C.A."/>
            <person name="Sycamore N."/>
            <person name="Tamlyn-Hall G."/>
            <person name="Tester J."/>
            <person name="Theaker A.J."/>
            <person name="Thomas D.W."/>
            <person name="Thorpe A."/>
            <person name="Tracey A."/>
            <person name="Tromans A."/>
            <person name="Tubby B."/>
            <person name="Wall M."/>
            <person name="Wallis J.M."/>
            <person name="West A.P."/>
            <person name="White S.S."/>
            <person name="Whitehead S.L."/>
            <person name="Whittaker H."/>
            <person name="Wild A."/>
            <person name="Willey D.J."/>
            <person name="Wilmer T.E."/>
            <person name="Wood J.M."/>
            <person name="Wray P.W."/>
            <person name="Wyatt J.C."/>
            <person name="Young L."/>
            <person name="Younger R.M."/>
            <person name="Bentley D.R."/>
            <person name="Coulson A."/>
            <person name="Durbin R.M."/>
            <person name="Hubbard T."/>
            <person name="Sulston J.E."/>
            <person name="Dunham I."/>
            <person name="Rogers J."/>
            <person name="Beck S."/>
        </authorList>
    </citation>
    <scope>NUCLEOTIDE SEQUENCE [LARGE SCALE GENOMIC DNA]</scope>
</reference>
<reference key="7">
    <citation type="submission" date="2005-09" db="EMBL/GenBank/DDBJ databases">
        <authorList>
            <person name="Mural R.J."/>
            <person name="Istrail S."/>
            <person name="Sutton G."/>
            <person name="Florea L."/>
            <person name="Halpern A.L."/>
            <person name="Mobarry C.M."/>
            <person name="Lippert R."/>
            <person name="Walenz B."/>
            <person name="Shatkay H."/>
            <person name="Dew I."/>
            <person name="Miller J.R."/>
            <person name="Flanigan M.J."/>
            <person name="Edwards N.J."/>
            <person name="Bolanos R."/>
            <person name="Fasulo D."/>
            <person name="Halldorsson B.V."/>
            <person name="Hannenhalli S."/>
            <person name="Turner R."/>
            <person name="Yooseph S."/>
            <person name="Lu F."/>
            <person name="Nusskern D.R."/>
            <person name="Shue B.C."/>
            <person name="Zheng X.H."/>
            <person name="Zhong F."/>
            <person name="Delcher A.L."/>
            <person name="Huson D.H."/>
            <person name="Kravitz S.A."/>
            <person name="Mouchard L."/>
            <person name="Reinert K."/>
            <person name="Remington K.A."/>
            <person name="Clark A.G."/>
            <person name="Waterman M.S."/>
            <person name="Eichler E.E."/>
            <person name="Adams M.D."/>
            <person name="Hunkapiller M.W."/>
            <person name="Myers E.W."/>
            <person name="Venter J.C."/>
        </authorList>
    </citation>
    <scope>NUCLEOTIDE SEQUENCE [LARGE SCALE GENOMIC DNA]</scope>
</reference>
<reference key="8">
    <citation type="journal article" date="1994" name="J. Neurochem.">
        <title>RNA editing of the glutamate receptor subunits GluR2 and GluR6 in human brain tissue.</title>
        <authorList>
            <person name="Paschen W."/>
            <person name="Hedreen J.C."/>
            <person name="Ross C.A."/>
        </authorList>
    </citation>
    <scope>RNA EDITING OF POSITION 621</scope>
</reference>
<reference key="9">
    <citation type="journal article" date="1994" name="NeuroReport">
        <title>RNA editing of human kainate receptor subunits.</title>
        <authorList>
            <person name="Nutt S.L."/>
            <person name="Kamboj R.K."/>
        </authorList>
    </citation>
    <scope>RNA EDITING OF POSITIONS 567; 571 AND 621</scope>
    <source>
        <tissue>Brain</tissue>
    </source>
</reference>
<reference key="10">
    <citation type="journal article" date="1996" name="J. Physiol. (Lond.)">
        <title>Effect of RNA editing and subunit co-assembly single-channel properties of recombinant kainate receptors.</title>
        <authorList>
            <person name="Swanson G.T."/>
            <person name="Feldmeyer D."/>
            <person name="Kaneda M."/>
            <person name="Cull-Candy S.G."/>
        </authorList>
    </citation>
    <scope>FUNCTION</scope>
    <scope>SUBUNIT</scope>
    <scope>RNA EDITING</scope>
</reference>
<reference key="11">
    <citation type="journal article" date="2002" name="J. Biol. Chem.">
        <title>The PDZ1 domain of SAP90. Characterization of structure and binding.</title>
        <authorList>
            <person name="Piserchio A."/>
            <person name="Pellegrini M."/>
            <person name="Mehta S."/>
            <person name="Blackman S.M."/>
            <person name="Garcia E.P."/>
            <person name="Marshall J."/>
            <person name="Mierke D.F."/>
        </authorList>
    </citation>
    <scope>INTERACTION WITH DLG4</scope>
</reference>
<reference key="12">
    <citation type="journal article" date="2003" name="Biochem. Biophys. Res. Commun.">
        <title>Trafficking and surface expression of the glutamate receptor subunit, KA2.</title>
        <authorList>
            <person name="Hayes D.M."/>
            <person name="Braud S."/>
            <person name="Hurtado D.E."/>
            <person name="McCallum J."/>
            <person name="Standley S."/>
            <person name="Isaac J.T."/>
            <person name="Roche K.W."/>
        </authorList>
    </citation>
    <scope>FUNCTION</scope>
    <scope>SUBCELLULAR LOCATION</scope>
</reference>
<reference key="13">
    <citation type="journal article" date="2012" name="Commun. Integr. Biol.">
        <title>Modification and movement: Phosphorylation and SUMOylation regulate endocytosis of GluK2-containing kainate receptors.</title>
        <authorList>
            <person name="Wilkinson K.A."/>
            <person name="Konopacki F."/>
            <person name="Henley J.M."/>
        </authorList>
    </citation>
    <scope>PHOSPHORYLATION AT SER-846 AND SER-868</scope>
    <scope>SUMOYLATION AT LYS-886</scope>
</reference>
<reference key="14">
    <citation type="journal article" date="2019" name="Cell">
        <title>A Cold-Sensing Receptor Encoded by a Glutamate Receptor Gene.</title>
        <authorList>
            <person name="Gong J."/>
            <person name="Liu J."/>
            <person name="Ronan E.A."/>
            <person name="He F."/>
            <person name="Cai W."/>
            <person name="Fatima M."/>
            <person name="Zhang W."/>
            <person name="Lee H."/>
            <person name="Li Z."/>
            <person name="Kim G.H."/>
            <person name="Pipe K.P."/>
            <person name="Duan B."/>
            <person name="Liu J."/>
            <person name="Xu X.Z.S."/>
        </authorList>
    </citation>
    <scope>FUNCTION</scope>
    <scope>ACTIVITY REGULATION</scope>
</reference>
<reference key="15">
    <citation type="journal article" date="2011" name="J. Mol. Biol.">
        <title>Binding and selectivity of the marine toxin neodysiherbaine A and its synthetic analogues to GluK1 and GluK2 kainate receptors.</title>
        <authorList>
            <person name="Unno M."/>
            <person name="Shinohara M."/>
            <person name="Takayama K."/>
            <person name="Tanaka H."/>
            <person name="Teruya K."/>
            <person name="Doh-ura K."/>
            <person name="Sakai R."/>
            <person name="Sasaki M."/>
            <person name="Ikeda-Saito M."/>
        </authorList>
    </citation>
    <scope>X-RAY CRYSTALLOGRAPHY (1.65 ANGSTROMS) OF 429-806 IN COMPLEX WITH AGONIST</scope>
    <scope>GLUTAMATE-BINDING</scope>
    <scope>DISULFIDE BOND</scope>
</reference>
<reference key="16">
    <citation type="journal article" date="2006" name="Science">
        <title>The consensus coding sequences of human breast and colorectal cancers.</title>
        <authorList>
            <person name="Sjoeblom T."/>
            <person name="Jones S."/>
            <person name="Wood L.D."/>
            <person name="Parsons D.W."/>
            <person name="Lin J."/>
            <person name="Barber T.D."/>
            <person name="Mandelker D."/>
            <person name="Leary R.J."/>
            <person name="Ptak J."/>
            <person name="Silliman N."/>
            <person name="Szabo S."/>
            <person name="Buckhaults P."/>
            <person name="Farrell C."/>
            <person name="Meeh P."/>
            <person name="Markowitz S.D."/>
            <person name="Willis J."/>
            <person name="Dawson D."/>
            <person name="Willson J.K.V."/>
            <person name="Gazdar A.F."/>
            <person name="Hartigan J."/>
            <person name="Wu L."/>
            <person name="Liu C."/>
            <person name="Parmigiani G."/>
            <person name="Park B.H."/>
            <person name="Bachman K.E."/>
            <person name="Papadopoulos N."/>
            <person name="Vogelstein B."/>
            <person name="Kinzler K.W."/>
            <person name="Velculescu V.E."/>
        </authorList>
    </citation>
    <scope>VARIANT [LARGE SCALE ANALYSIS] GLN-187</scope>
</reference>
<reference key="17">
    <citation type="journal article" date="2007" name="Am. J. Hum. Genet.">
        <title>A defect in the ionotropic glutamate receptor 6 gene (GRIK2) is associated with autosomal recessive mental retardation.</title>
        <authorList>
            <person name="Motazacker M.M."/>
            <person name="Rost B.R."/>
            <person name="Hucho T."/>
            <person name="Garshasbi M."/>
            <person name="Kahrizi K."/>
            <person name="Ullmann R."/>
            <person name="Abedini S.S."/>
            <person name="Nieh S.E."/>
            <person name="Amini S.H."/>
            <person name="Goswami C."/>
            <person name="Tzschach A."/>
            <person name="Jensen L.R."/>
            <person name="Schmitz D."/>
            <person name="Ropers H.H."/>
            <person name="Najmabadi H."/>
            <person name="Kuss A.W."/>
        </authorList>
    </citation>
    <scope>INVOLVEMENT IN MRT6</scope>
</reference>
<reference key="18">
    <citation type="journal article" date="2017" name="Neurol. Genet.">
        <title>A gain-of-function mutation in the GRIK2 gene causes neurodevelopmental deficits.</title>
        <authorList>
            <person name="Guzman Y.F."/>
            <person name="Ramsey K."/>
            <person name="Stolz J.R."/>
            <person name="Craig D.W."/>
            <person name="Huentelman M.J."/>
            <person name="Narayanan V."/>
            <person name="Swanson G.T."/>
        </authorList>
    </citation>
    <scope>INVOLVEMENT IN NEDLAS</scope>
    <scope>VARIANT NEDLAS THR-657</scope>
    <scope>VARIANT ILE-867</scope>
    <scope>CHARACTERIZATION OF VARIANT NEDLAS THR-657</scope>
    <scope>FUNCTION</scope>
</reference>
<reference key="19">
    <citation type="journal article" date="2021" name="Am. J. Hum. Genet.">
        <title>Clustered mutations in the GRIK2 kainate receptor subunit gene underlie diverse neurodevelopmental disorders.</title>
        <authorList>
            <person name="Stolz J.R."/>
            <person name="Foote K.M."/>
            <person name="Veenstra-Knol H.E."/>
            <person name="Pfundt R."/>
            <person name="Ten Broeke S.W."/>
            <person name="de Leeuw N."/>
            <person name="Roht L."/>
            <person name="Pajusalu S."/>
            <person name="Part R."/>
            <person name="Rebane I."/>
            <person name="Ounap K."/>
            <person name="Stark Z."/>
            <person name="Kirk E.P."/>
            <person name="Lawson J.A."/>
            <person name="Lunke S."/>
            <person name="Christodoulou J."/>
            <person name="Louie R.J."/>
            <person name="Rogers R.C."/>
            <person name="Davis J.M."/>
            <person name="Innes A.M."/>
            <person name="Wei X.C."/>
            <person name="Keren B."/>
            <person name="Mignot C."/>
            <person name="Lebel R.R."/>
            <person name="Sperber S.M."/>
            <person name="Sakonju A."/>
            <person name="Dosa N."/>
            <person name="Barge-Schaapveld D.Q.C.M."/>
            <person name="Peeters-Scholte C.M.P.C.D."/>
            <person name="Ruivenkamp C.A.L."/>
            <person name="van Bon B.W."/>
            <person name="Kennedy J."/>
            <person name="Low K.J."/>
            <person name="Ellard S."/>
            <person name="Pang L."/>
            <person name="Junewick J.J."/>
            <person name="Mark P.R."/>
            <person name="Carvill G.L."/>
            <person name="Swanson G.T."/>
        </authorList>
    </citation>
    <scope>INVOLVEMENT IN NEDLAS</scope>
    <scope>VARIANTS NEDLAS THR-657; ARG-660; LYS-660 AND THR-668</scope>
    <scope>CHARACTERIZATION OF VARIANTS NEDLAS THR-657; ARG-660; LYS-660 AND THR-668</scope>
    <scope>SUBCELLULAR LOCATION</scope>
    <scope>FUNCTION</scope>
</reference>
<evidence type="ECO:0000250" key="1">
    <source>
        <dbReference type="UniProtKB" id="P39087"/>
    </source>
</evidence>
<evidence type="ECO:0000250" key="2">
    <source>
        <dbReference type="UniProtKB" id="P42260"/>
    </source>
</evidence>
<evidence type="ECO:0000255" key="3"/>
<evidence type="ECO:0000269" key="4">
    <source>
    </source>
</evidence>
<evidence type="ECO:0000269" key="5">
    <source>
    </source>
</evidence>
<evidence type="ECO:0000269" key="6">
    <source>
    </source>
</evidence>
<evidence type="ECO:0000269" key="7">
    <source>
    </source>
</evidence>
<evidence type="ECO:0000269" key="8">
    <source>
    </source>
</evidence>
<evidence type="ECO:0000269" key="9">
    <source>
    </source>
</evidence>
<evidence type="ECO:0000269" key="10">
    <source>
    </source>
</evidence>
<evidence type="ECO:0000269" key="11">
    <source>
    </source>
</evidence>
<evidence type="ECO:0000269" key="12">
    <source>
    </source>
</evidence>
<evidence type="ECO:0000269" key="13">
    <source>
    </source>
</evidence>
<evidence type="ECO:0000269" key="14">
    <source>
    </source>
</evidence>
<evidence type="ECO:0000269" key="15">
    <source>
    </source>
</evidence>
<evidence type="ECO:0000269" key="16">
    <source>
    </source>
</evidence>
<evidence type="ECO:0000269" key="17">
    <source>
    </source>
</evidence>
<evidence type="ECO:0000303" key="18">
    <source>
    </source>
</evidence>
<evidence type="ECO:0000303" key="19">
    <source>
    </source>
</evidence>
<evidence type="ECO:0000303" key="20">
    <source ref="3"/>
</evidence>
<evidence type="ECO:0000305" key="21"/>
<evidence type="ECO:0007744" key="22">
    <source>
        <dbReference type="PDB" id="3QXM"/>
    </source>
</evidence>
<evidence type="ECO:0007829" key="23">
    <source>
        <dbReference type="PDB" id="3QXM"/>
    </source>
</evidence>
<gene>
    <name type="primary">GRIK2</name>
    <name type="synonym">GLUR6</name>
</gene>
<dbReference type="EMBL" id="U16126">
    <property type="protein sequence ID" value="AAC50420.1"/>
    <property type="molecule type" value="mRNA"/>
</dbReference>
<dbReference type="EMBL" id="AJ252246">
    <property type="protein sequence ID" value="CAC81020.1"/>
    <property type="molecule type" value="mRNA"/>
</dbReference>
<dbReference type="EMBL" id="AJ301608">
    <property type="protein sequence ID" value="CAC67485.1"/>
    <property type="molecule type" value="mRNA"/>
</dbReference>
<dbReference type="EMBL" id="AJ301609">
    <property type="protein sequence ID" value="CAC67486.1"/>
    <property type="molecule type" value="mRNA"/>
</dbReference>
<dbReference type="EMBL" id="AJ301610">
    <property type="protein sequence ID" value="CAC67487.1"/>
    <property type="molecule type" value="mRNA"/>
</dbReference>
<dbReference type="EMBL" id="HM149335">
    <property type="protein sequence ID" value="ADH93569.1"/>
    <property type="molecule type" value="mRNA"/>
</dbReference>
<dbReference type="EMBL" id="HM149336">
    <property type="protein sequence ID" value="ADH93570.1"/>
    <property type="molecule type" value="mRNA"/>
</dbReference>
<dbReference type="EMBL" id="HM149337">
    <property type="protein sequence ID" value="ADH93571.1"/>
    <property type="molecule type" value="mRNA"/>
</dbReference>
<dbReference type="EMBL" id="HM149338">
    <property type="protein sequence ID" value="ADH93572.1"/>
    <property type="molecule type" value="mRNA"/>
</dbReference>
<dbReference type="EMBL" id="HM149339">
    <property type="protein sequence ID" value="ADH93573.1"/>
    <property type="molecule type" value="mRNA"/>
</dbReference>
<dbReference type="EMBL" id="AL109919">
    <property type="status" value="NOT_ANNOTATED_CDS"/>
    <property type="molecule type" value="Genomic_DNA"/>
</dbReference>
<dbReference type="EMBL" id="AP002528">
    <property type="status" value="NOT_ANNOTATED_CDS"/>
    <property type="molecule type" value="Genomic_DNA"/>
</dbReference>
<dbReference type="EMBL" id="AP002529">
    <property type="status" value="NOT_ANNOTATED_CDS"/>
    <property type="molecule type" value="Genomic_DNA"/>
</dbReference>
<dbReference type="EMBL" id="AP002530">
    <property type="status" value="NOT_ANNOTATED_CDS"/>
    <property type="molecule type" value="Genomic_DNA"/>
</dbReference>
<dbReference type="EMBL" id="CH471051">
    <property type="protein sequence ID" value="EAW48448.1"/>
    <property type="molecule type" value="Genomic_DNA"/>
</dbReference>
<dbReference type="CCDS" id="CCDS5048.1">
    <molecule id="Q13002-1"/>
</dbReference>
<dbReference type="CCDS" id="CCDS5049.1">
    <molecule id="Q13002-2"/>
</dbReference>
<dbReference type="CCDS" id="CCDS55045.1">
    <molecule id="Q13002-5"/>
</dbReference>
<dbReference type="PIR" id="A54260">
    <property type="entry name" value="A54260"/>
</dbReference>
<dbReference type="RefSeq" id="NP_001159719.1">
    <molecule id="Q13002-5"/>
    <property type="nucleotide sequence ID" value="NM_001166247.1"/>
</dbReference>
<dbReference type="RefSeq" id="NP_068775.1">
    <molecule id="Q13002-1"/>
    <property type="nucleotide sequence ID" value="NM_021956.5"/>
</dbReference>
<dbReference type="RefSeq" id="NP_786944.1">
    <molecule id="Q13002-2"/>
    <property type="nucleotide sequence ID" value="NM_175768.3"/>
</dbReference>
<dbReference type="RefSeq" id="XP_005267002.1">
    <property type="nucleotide sequence ID" value="XM_005266945.2"/>
</dbReference>
<dbReference type="RefSeq" id="XP_011534079.1">
    <property type="nucleotide sequence ID" value="XM_011535777.2"/>
</dbReference>
<dbReference type="RefSeq" id="XP_011534080.1">
    <property type="nucleotide sequence ID" value="XM_011535778.2"/>
</dbReference>
<dbReference type="RefSeq" id="XP_047274637.1">
    <molecule id="Q13002-1"/>
    <property type="nucleotide sequence ID" value="XM_047418681.1"/>
</dbReference>
<dbReference type="RefSeq" id="XP_047274638.1">
    <molecule id="Q13002-2"/>
    <property type="nucleotide sequence ID" value="XM_047418682.1"/>
</dbReference>
<dbReference type="RefSeq" id="XP_054211218.1">
    <molecule id="Q13002-1"/>
    <property type="nucleotide sequence ID" value="XM_054355243.1"/>
</dbReference>
<dbReference type="RefSeq" id="XP_054211219.1">
    <molecule id="Q13002-2"/>
    <property type="nucleotide sequence ID" value="XM_054355244.1"/>
</dbReference>
<dbReference type="PDB" id="3QXM">
    <property type="method" value="X-ray"/>
    <property type="resolution" value="1.65 A"/>
    <property type="chains" value="A/B=429-544, A/B=667-806"/>
</dbReference>
<dbReference type="PDB" id="5CMM">
    <property type="method" value="X-ray"/>
    <property type="resolution" value="1.27 A"/>
    <property type="chains" value="A=667-806"/>
</dbReference>
<dbReference type="PDBsum" id="3QXM"/>
<dbReference type="PDBsum" id="5CMM"/>
<dbReference type="SMR" id="Q13002"/>
<dbReference type="BioGRID" id="109155">
    <property type="interactions" value="23"/>
</dbReference>
<dbReference type="ComplexPortal" id="CPX-8468">
    <property type="entry name" value="GluK2 glutamate ionotropic kainate-type receptor complex"/>
</dbReference>
<dbReference type="ComplexPortal" id="CPX-8503">
    <property type="entry name" value="GLUK2-GLUK5 glutamate ionotropic kainate-type receptor complex"/>
</dbReference>
<dbReference type="ComplexPortal" id="CPX-8525">
    <property type="entry name" value="GLUK1-GLUK2-GLUK5 glutamate ionotropic kainate-type receptor complex"/>
</dbReference>
<dbReference type="ComplexPortal" id="CPX-8545">
    <property type="entry name" value="GLUK1-GLUK2 glutamate ionotropic kainate-type receptor complex"/>
</dbReference>
<dbReference type="ComplexPortal" id="CPX-8553">
    <property type="entry name" value="GLUK2-GLUK3 glutamate ionotropic kainate-type receptor complex"/>
</dbReference>
<dbReference type="ComplexPortal" id="CPX-8556">
    <property type="entry name" value="GLUK1-GLUK2-GLUK3-GLUK5 glutamate ionotropic kainate-type receptor complex"/>
</dbReference>
<dbReference type="ComplexPortal" id="CPX-8630">
    <property type="entry name" value="GLUK2-GLUK4 glutamate ionotropic kainate-type receptor complex"/>
</dbReference>
<dbReference type="ComplexPortal" id="CPX-8632">
    <property type="entry name" value="GLUK1-GLUK2-GLUK4 glutamate ionotropic kainate-type receptor complex"/>
</dbReference>
<dbReference type="ComplexPortal" id="CPX-8634">
    <property type="entry name" value="GLUK1-GLUK2-GLUK3-GLUK4 glutamate ionotropic kainate-type receptor complex"/>
</dbReference>
<dbReference type="CORUM" id="Q13002"/>
<dbReference type="FunCoup" id="Q13002">
    <property type="interactions" value="685"/>
</dbReference>
<dbReference type="IntAct" id="Q13002">
    <property type="interactions" value="3"/>
</dbReference>
<dbReference type="STRING" id="9606.ENSP00000397026"/>
<dbReference type="BindingDB" id="Q13002"/>
<dbReference type="ChEMBL" id="CHEMBL3683"/>
<dbReference type="DrugBank" id="DB03425">
    <property type="generic name" value="2s,4r-4-Methylglutamate"/>
</dbReference>
<dbReference type="DrugBank" id="DB01351">
    <property type="generic name" value="Amobarbital"/>
</dbReference>
<dbReference type="DrugBank" id="DB01352">
    <property type="generic name" value="Aprobarbital"/>
</dbReference>
<dbReference type="DrugBank" id="DB01483">
    <property type="generic name" value="Barbital"/>
</dbReference>
<dbReference type="DrugBank" id="DB00237">
    <property type="generic name" value="Butabarbital"/>
</dbReference>
<dbReference type="DrugBank" id="DB00241">
    <property type="generic name" value="Butalbital"/>
</dbReference>
<dbReference type="DrugBank" id="DB01353">
    <property type="generic name" value="Butobarbital"/>
</dbReference>
<dbReference type="DrugBank" id="DB01496">
    <property type="generic name" value="Dihydro-2-thioxo-5-((5-(2-(trifluoromethyl)phenyl)-2-furanyl)methyl)-4,6(1H,5H)-pyrimidinedione"/>
</dbReference>
<dbReference type="DrugBank" id="DB02852">
    <property type="generic name" value="Domoic Acid"/>
</dbReference>
<dbReference type="DrugBank" id="DB00142">
    <property type="generic name" value="Glutamic acid"/>
</dbReference>
<dbReference type="DrugBank" id="DB01354">
    <property type="generic name" value="Heptabarbital"/>
</dbReference>
<dbReference type="DrugBank" id="DB01355">
    <property type="generic name" value="Hexobarbital"/>
</dbReference>
<dbReference type="DrugBank" id="DB00463">
    <property type="generic name" value="Metharbital"/>
</dbReference>
<dbReference type="DrugBank" id="DB00849">
    <property type="generic name" value="Methylphenobarbital"/>
</dbReference>
<dbReference type="DrugBank" id="DB00312">
    <property type="generic name" value="Pentobarbital"/>
</dbReference>
<dbReference type="DrugBank" id="DB01174">
    <property type="generic name" value="Phenobarbital"/>
</dbReference>
<dbReference type="DrugBank" id="DB00794">
    <property type="generic name" value="Primidone"/>
</dbReference>
<dbReference type="DrugBank" id="DB02999">
    <property type="generic name" value="Quisqualic acid"/>
</dbReference>
<dbReference type="DrugBank" id="DB00418">
    <property type="generic name" value="Secobarbital"/>
</dbReference>
<dbReference type="DrugBank" id="DB00306">
    <property type="generic name" value="Talbutal"/>
</dbReference>
<dbReference type="DrugBank" id="DB00599">
    <property type="generic name" value="Thiopental"/>
</dbReference>
<dbReference type="DrugBank" id="DB00273">
    <property type="generic name" value="Topiramate"/>
</dbReference>
<dbReference type="DrugCentral" id="Q13002"/>
<dbReference type="GuidetoPHARMACOLOGY" id="451"/>
<dbReference type="GlyCosmos" id="Q13002">
    <property type="glycosylation" value="9 sites, No reported glycans"/>
</dbReference>
<dbReference type="GlyGen" id="Q13002">
    <property type="glycosylation" value="11 sites, 5 N-linked glycans (7 sites), 1 O-linked glycan (1 site)"/>
</dbReference>
<dbReference type="iPTMnet" id="Q13002"/>
<dbReference type="PhosphoSitePlus" id="Q13002"/>
<dbReference type="SwissPalm" id="Q13002"/>
<dbReference type="BioMuta" id="GRIK2"/>
<dbReference type="DMDM" id="2492627"/>
<dbReference type="jPOST" id="Q13002"/>
<dbReference type="MassIVE" id="Q13002"/>
<dbReference type="PaxDb" id="9606-ENSP00000397026"/>
<dbReference type="PeptideAtlas" id="Q13002"/>
<dbReference type="ProteomicsDB" id="59089">
    <molecule id="Q13002-1"/>
</dbReference>
<dbReference type="ProteomicsDB" id="59090">
    <molecule id="Q13002-2"/>
</dbReference>
<dbReference type="ProteomicsDB" id="59091">
    <molecule id="Q13002-3"/>
</dbReference>
<dbReference type="ProteomicsDB" id="59092">
    <molecule id="Q13002-4"/>
</dbReference>
<dbReference type="ProteomicsDB" id="59093">
    <molecule id="Q13002-5"/>
</dbReference>
<dbReference type="Antibodypedia" id="3038">
    <property type="antibodies" value="355 antibodies from 36 providers"/>
</dbReference>
<dbReference type="DNASU" id="2898"/>
<dbReference type="Ensembl" id="ENST00000369134.9">
    <molecule id="Q13002-1"/>
    <property type="protein sequence ID" value="ENSP00000358130.6"/>
    <property type="gene ID" value="ENSG00000164418.22"/>
</dbReference>
<dbReference type="Ensembl" id="ENST00000369138.5">
    <molecule id="Q13002-5"/>
    <property type="protein sequence ID" value="ENSP00000358134.1"/>
    <property type="gene ID" value="ENSG00000164418.22"/>
</dbReference>
<dbReference type="Ensembl" id="ENST00000413795.5">
    <molecule id="Q13002-2"/>
    <property type="protein sequence ID" value="ENSP00000405596.1"/>
    <property type="gene ID" value="ENSG00000164418.22"/>
</dbReference>
<dbReference type="Ensembl" id="ENST00000421544.6">
    <molecule id="Q13002-1"/>
    <property type="protein sequence ID" value="ENSP00000397026.1"/>
    <property type="gene ID" value="ENSG00000164418.22"/>
</dbReference>
<dbReference type="Ensembl" id="ENST00000682090.1">
    <molecule id="Q13002-1"/>
    <property type="protein sequence ID" value="ENSP00000508130.1"/>
    <property type="gene ID" value="ENSG00000164418.22"/>
</dbReference>
<dbReference type="Ensembl" id="ENST00000683215.1">
    <molecule id="Q13002-1"/>
    <property type="protein sequence ID" value="ENSP00000507424.1"/>
    <property type="gene ID" value="ENSG00000164418.22"/>
</dbReference>
<dbReference type="Ensembl" id="ENST00000684068.1">
    <molecule id="Q13002-5"/>
    <property type="protein sequence ID" value="ENSP00000508175.1"/>
    <property type="gene ID" value="ENSG00000164418.22"/>
</dbReference>
<dbReference type="GeneID" id="2898"/>
<dbReference type="KEGG" id="hsa:2898"/>
<dbReference type="MANE-Select" id="ENST00000369134.9">
    <property type="protein sequence ID" value="ENSP00000358130.6"/>
    <property type="RefSeq nucleotide sequence ID" value="NM_021956.5"/>
    <property type="RefSeq protein sequence ID" value="NP_068775.1"/>
</dbReference>
<dbReference type="UCSC" id="uc003pqo.5">
    <molecule id="Q13002-1"/>
    <property type="organism name" value="human"/>
</dbReference>
<dbReference type="AGR" id="HGNC:4580"/>
<dbReference type="CTD" id="2898"/>
<dbReference type="DisGeNET" id="2898"/>
<dbReference type="GeneCards" id="GRIK2"/>
<dbReference type="HGNC" id="HGNC:4580">
    <property type="gene designation" value="GRIK2"/>
</dbReference>
<dbReference type="HPA" id="ENSG00000164418">
    <property type="expression patterns" value="Tissue enriched (brain)"/>
</dbReference>
<dbReference type="MalaCards" id="GRIK2"/>
<dbReference type="MIM" id="138244">
    <property type="type" value="gene"/>
</dbReference>
<dbReference type="MIM" id="611092">
    <property type="type" value="phenotype"/>
</dbReference>
<dbReference type="MIM" id="619580">
    <property type="type" value="phenotype"/>
</dbReference>
<dbReference type="neXtProt" id="NX_Q13002"/>
<dbReference type="OpenTargets" id="ENSG00000164418"/>
<dbReference type="Orphanet" id="88616">
    <property type="disease" value="Autosomal recessive non-syndromic intellectual disability"/>
</dbReference>
<dbReference type="PharmGKB" id="PA164741600"/>
<dbReference type="VEuPathDB" id="HostDB:ENSG00000164418"/>
<dbReference type="eggNOG" id="KOG1052">
    <property type="taxonomic scope" value="Eukaryota"/>
</dbReference>
<dbReference type="GeneTree" id="ENSGT00940000155610"/>
<dbReference type="InParanoid" id="Q13002"/>
<dbReference type="OMA" id="QCKFRVI"/>
<dbReference type="OrthoDB" id="5984008at2759"/>
<dbReference type="PAN-GO" id="Q13002">
    <property type="GO annotations" value="8 GO annotations based on evolutionary models"/>
</dbReference>
<dbReference type="PhylomeDB" id="Q13002"/>
<dbReference type="TreeFam" id="TF334668"/>
<dbReference type="PathwayCommons" id="Q13002"/>
<dbReference type="Reactome" id="R-HSA-451307">
    <property type="pathway name" value="Activation of Na-permeable kainate receptors"/>
</dbReference>
<dbReference type="Reactome" id="R-HSA-451308">
    <property type="pathway name" value="Activation of Ca-permeable Kainate Receptor"/>
</dbReference>
<dbReference type="SignaLink" id="Q13002"/>
<dbReference type="SIGNOR" id="Q13002"/>
<dbReference type="BioGRID-ORCS" id="2898">
    <property type="hits" value="10 hits in 1150 CRISPR screens"/>
</dbReference>
<dbReference type="ChiTaRS" id="GRIK2">
    <property type="organism name" value="human"/>
</dbReference>
<dbReference type="EvolutionaryTrace" id="Q13002"/>
<dbReference type="GeneWiki" id="GRIK2"/>
<dbReference type="GenomeRNAi" id="2898"/>
<dbReference type="Pharos" id="Q13002">
    <property type="development level" value="Tclin"/>
</dbReference>
<dbReference type="PRO" id="PR:Q13002"/>
<dbReference type="Proteomes" id="UP000005640">
    <property type="component" value="Chromosome 6"/>
</dbReference>
<dbReference type="RNAct" id="Q13002">
    <property type="molecule type" value="protein"/>
</dbReference>
<dbReference type="Bgee" id="ENSG00000164418">
    <property type="expression patterns" value="Expressed in cerebellar vermis and 152 other cell types or tissues"/>
</dbReference>
<dbReference type="ExpressionAtlas" id="Q13002">
    <property type="expression patterns" value="baseline and differential"/>
</dbReference>
<dbReference type="GO" id="GO:0032839">
    <property type="term" value="C:dendrite cytoplasm"/>
    <property type="evidence" value="ECO:0007669"/>
    <property type="project" value="Ensembl"/>
</dbReference>
<dbReference type="GO" id="GO:0098978">
    <property type="term" value="C:glutamatergic synapse"/>
    <property type="evidence" value="ECO:0007669"/>
    <property type="project" value="Ensembl"/>
</dbReference>
<dbReference type="GO" id="GO:0098686">
    <property type="term" value="C:hippocampal mossy fiber to CA3 synapse"/>
    <property type="evidence" value="ECO:0007669"/>
    <property type="project" value="Ensembl"/>
</dbReference>
<dbReference type="GO" id="GO:0032983">
    <property type="term" value="C:kainate selective glutamate receptor complex"/>
    <property type="evidence" value="ECO:0000318"/>
    <property type="project" value="GO_Central"/>
</dbReference>
<dbReference type="GO" id="GO:0097471">
    <property type="term" value="C:mossy fiber rosette"/>
    <property type="evidence" value="ECO:0007669"/>
    <property type="project" value="Ensembl"/>
</dbReference>
<dbReference type="GO" id="GO:0043204">
    <property type="term" value="C:perikaryon"/>
    <property type="evidence" value="ECO:0007669"/>
    <property type="project" value="Ensembl"/>
</dbReference>
<dbReference type="GO" id="GO:0005886">
    <property type="term" value="C:plasma membrane"/>
    <property type="evidence" value="ECO:0000314"/>
    <property type="project" value="UniProtKB"/>
</dbReference>
<dbReference type="GO" id="GO:0098839">
    <property type="term" value="C:postsynaptic density membrane"/>
    <property type="evidence" value="ECO:0000318"/>
    <property type="project" value="GO_Central"/>
</dbReference>
<dbReference type="GO" id="GO:0042734">
    <property type="term" value="C:presynaptic membrane"/>
    <property type="evidence" value="ECO:0000318"/>
    <property type="project" value="GO_Central"/>
</dbReference>
<dbReference type="GO" id="GO:0043195">
    <property type="term" value="C:terminal bouton"/>
    <property type="evidence" value="ECO:0007669"/>
    <property type="project" value="Ensembl"/>
</dbReference>
<dbReference type="GO" id="GO:0005234">
    <property type="term" value="F:extracellularly glutamate-gated ion channel activity"/>
    <property type="evidence" value="ECO:0000315"/>
    <property type="project" value="UniProtKB"/>
</dbReference>
<dbReference type="GO" id="GO:0022849">
    <property type="term" value="F:glutamate-gated calcium ion channel activity"/>
    <property type="evidence" value="ECO:0007669"/>
    <property type="project" value="Ensembl"/>
</dbReference>
<dbReference type="GO" id="GO:0004970">
    <property type="term" value="F:glutamate-gated receptor activity"/>
    <property type="evidence" value="ECO:0000314"/>
    <property type="project" value="UniProtKB"/>
</dbReference>
<dbReference type="GO" id="GO:0042802">
    <property type="term" value="F:identical protein binding"/>
    <property type="evidence" value="ECO:0007669"/>
    <property type="project" value="Ensembl"/>
</dbReference>
<dbReference type="GO" id="GO:0015277">
    <property type="term" value="F:kainate selective glutamate receptor activity"/>
    <property type="evidence" value="ECO:0000314"/>
    <property type="project" value="UniProtKB"/>
</dbReference>
<dbReference type="GO" id="GO:0099507">
    <property type="term" value="F:ligand-gated monoatomic ion channel activity involved in regulation of presynaptic membrane potential"/>
    <property type="evidence" value="ECO:0007669"/>
    <property type="project" value="Ensembl"/>
</dbReference>
<dbReference type="GO" id="GO:0030165">
    <property type="term" value="F:PDZ domain binding"/>
    <property type="evidence" value="ECO:0007669"/>
    <property type="project" value="Ensembl"/>
</dbReference>
<dbReference type="GO" id="GO:0097110">
    <property type="term" value="F:scaffold protein binding"/>
    <property type="evidence" value="ECO:0007669"/>
    <property type="project" value="Ensembl"/>
</dbReference>
<dbReference type="GO" id="GO:0000149">
    <property type="term" value="F:SNARE binding"/>
    <property type="evidence" value="ECO:0007669"/>
    <property type="project" value="Ensembl"/>
</dbReference>
<dbReference type="GO" id="GO:1904315">
    <property type="term" value="F:transmitter-gated monoatomic ion channel activity involved in regulation of postsynaptic membrane potential"/>
    <property type="evidence" value="ECO:0000318"/>
    <property type="project" value="GO_Central"/>
</dbReference>
<dbReference type="GO" id="GO:0031624">
    <property type="term" value="F:ubiquitin conjugating enzyme binding"/>
    <property type="evidence" value="ECO:0007669"/>
    <property type="project" value="Ensembl"/>
</dbReference>
<dbReference type="GO" id="GO:0031625">
    <property type="term" value="F:ubiquitin protein ligase binding"/>
    <property type="evidence" value="ECO:0007669"/>
    <property type="project" value="Ensembl"/>
</dbReference>
<dbReference type="GO" id="GO:0001662">
    <property type="term" value="P:behavioral fear response"/>
    <property type="evidence" value="ECO:0007669"/>
    <property type="project" value="Ensembl"/>
</dbReference>
<dbReference type="GO" id="GO:0007268">
    <property type="term" value="P:chemical synaptic transmission"/>
    <property type="evidence" value="ECO:0000304"/>
    <property type="project" value="ProtInc"/>
</dbReference>
<dbReference type="GO" id="GO:0120169">
    <property type="term" value="P:detection of cold stimulus involved in thermoception"/>
    <property type="evidence" value="ECO:0000250"/>
    <property type="project" value="UniProtKB"/>
</dbReference>
<dbReference type="GO" id="GO:0007215">
    <property type="term" value="P:glutamate receptor signaling pathway"/>
    <property type="evidence" value="ECO:0000304"/>
    <property type="project" value="ProtInc"/>
</dbReference>
<dbReference type="GO" id="GO:0060080">
    <property type="term" value="P:inhibitory postsynaptic potential"/>
    <property type="evidence" value="ECO:0007669"/>
    <property type="project" value="Ensembl"/>
</dbReference>
<dbReference type="GO" id="GO:0006874">
    <property type="term" value="P:intracellular calcium ion homeostasis"/>
    <property type="evidence" value="ECO:0007669"/>
    <property type="project" value="Ensembl"/>
</dbReference>
<dbReference type="GO" id="GO:0050804">
    <property type="term" value="P:modulation of chemical synaptic transmission"/>
    <property type="evidence" value="ECO:0000314"/>
    <property type="project" value="UniProtKB"/>
</dbReference>
<dbReference type="GO" id="GO:0098815">
    <property type="term" value="P:modulation of excitatory postsynaptic potential"/>
    <property type="evidence" value="ECO:0007669"/>
    <property type="project" value="Ensembl"/>
</dbReference>
<dbReference type="GO" id="GO:0043524">
    <property type="term" value="P:negative regulation of neuron apoptotic process"/>
    <property type="evidence" value="ECO:0007669"/>
    <property type="project" value="Ensembl"/>
</dbReference>
<dbReference type="GO" id="GO:0051967">
    <property type="term" value="P:negative regulation of synaptic transmission, glutamatergic"/>
    <property type="evidence" value="ECO:0007669"/>
    <property type="project" value="Ensembl"/>
</dbReference>
<dbReference type="GO" id="GO:0051402">
    <property type="term" value="P:neuron apoptotic process"/>
    <property type="evidence" value="ECO:0007669"/>
    <property type="project" value="Ensembl"/>
</dbReference>
<dbReference type="GO" id="GO:0019228">
    <property type="term" value="P:neuronal action potential"/>
    <property type="evidence" value="ECO:0007669"/>
    <property type="project" value="Ensembl"/>
</dbReference>
<dbReference type="GO" id="GO:0043525">
    <property type="term" value="P:positive regulation of neuron apoptotic process"/>
    <property type="evidence" value="ECO:0007669"/>
    <property type="project" value="Ensembl"/>
</dbReference>
<dbReference type="GO" id="GO:0050806">
    <property type="term" value="P:positive regulation of synaptic transmission"/>
    <property type="evidence" value="ECO:0000315"/>
    <property type="project" value="UniProtKB"/>
</dbReference>
<dbReference type="GO" id="GO:0099171">
    <property type="term" value="P:presynaptic modulation of chemical synaptic transmission"/>
    <property type="evidence" value="ECO:0007669"/>
    <property type="project" value="Ensembl"/>
</dbReference>
<dbReference type="GO" id="GO:0043113">
    <property type="term" value="P:receptor clustering"/>
    <property type="evidence" value="ECO:0007669"/>
    <property type="project" value="Ensembl"/>
</dbReference>
<dbReference type="GO" id="GO:0046328">
    <property type="term" value="P:regulation of JNK cascade"/>
    <property type="evidence" value="ECO:0007669"/>
    <property type="project" value="Ensembl"/>
</dbReference>
<dbReference type="GO" id="GO:0048169">
    <property type="term" value="P:regulation of long-term neuronal synaptic plasticity"/>
    <property type="evidence" value="ECO:0007669"/>
    <property type="project" value="Ensembl"/>
</dbReference>
<dbReference type="GO" id="GO:0048172">
    <property type="term" value="P:regulation of short-term neuronal synaptic plasticity"/>
    <property type="evidence" value="ECO:0000315"/>
    <property type="project" value="UniProtKB"/>
</dbReference>
<dbReference type="GO" id="GO:0035249">
    <property type="term" value="P:synaptic transmission, glutamatergic"/>
    <property type="evidence" value="ECO:0000318"/>
    <property type="project" value="GO_Central"/>
</dbReference>
<dbReference type="CDD" id="cd06382">
    <property type="entry name" value="PBP1_iGluR_Kainate"/>
    <property type="match status" value="1"/>
</dbReference>
<dbReference type="FunFam" id="3.40.50.2300:FF:000010">
    <property type="entry name" value="Glutamate ionotropic receptor kainate type subunit 1"/>
    <property type="match status" value="1"/>
</dbReference>
<dbReference type="FunFam" id="3.40.190.10:FF:000210">
    <property type="entry name" value="Glutamate receptor ionotropic, kainate 1"/>
    <property type="match status" value="1"/>
</dbReference>
<dbReference type="FunFam" id="3.40.190.10:FF:000240">
    <property type="entry name" value="Glutamate receptor ionotropic, kainate 2"/>
    <property type="match status" value="1"/>
</dbReference>
<dbReference type="FunFam" id="1.10.287.70:FF:000010">
    <property type="entry name" value="Putative glutamate receptor ionotropic kainate 1"/>
    <property type="match status" value="1"/>
</dbReference>
<dbReference type="Gene3D" id="1.10.287.70">
    <property type="match status" value="1"/>
</dbReference>
<dbReference type="Gene3D" id="3.40.50.2300">
    <property type="match status" value="2"/>
</dbReference>
<dbReference type="Gene3D" id="3.40.190.10">
    <property type="entry name" value="Periplasmic binding protein-like II"/>
    <property type="match status" value="1"/>
</dbReference>
<dbReference type="InterPro" id="IPR001828">
    <property type="entry name" value="ANF_lig-bd_rcpt"/>
</dbReference>
<dbReference type="InterPro" id="IPR019594">
    <property type="entry name" value="Glu/Gly-bd"/>
</dbReference>
<dbReference type="InterPro" id="IPR001508">
    <property type="entry name" value="Iono_Glu_rcpt_met"/>
</dbReference>
<dbReference type="InterPro" id="IPR015683">
    <property type="entry name" value="Ionotropic_Glu_rcpt"/>
</dbReference>
<dbReference type="InterPro" id="IPR001320">
    <property type="entry name" value="Iontro_rcpt_C"/>
</dbReference>
<dbReference type="InterPro" id="IPR028082">
    <property type="entry name" value="Peripla_BP_I"/>
</dbReference>
<dbReference type="PANTHER" id="PTHR18966">
    <property type="entry name" value="IONOTROPIC GLUTAMATE RECEPTOR"/>
    <property type="match status" value="1"/>
</dbReference>
<dbReference type="Pfam" id="PF01094">
    <property type="entry name" value="ANF_receptor"/>
    <property type="match status" value="1"/>
</dbReference>
<dbReference type="Pfam" id="PF00060">
    <property type="entry name" value="Lig_chan"/>
    <property type="match status" value="1"/>
</dbReference>
<dbReference type="Pfam" id="PF10613">
    <property type="entry name" value="Lig_chan-Glu_bd"/>
    <property type="match status" value="1"/>
</dbReference>
<dbReference type="PRINTS" id="PR00177">
    <property type="entry name" value="NMDARECEPTOR"/>
</dbReference>
<dbReference type="SMART" id="SM00918">
    <property type="entry name" value="Lig_chan-Glu_bd"/>
    <property type="match status" value="1"/>
</dbReference>
<dbReference type="SMART" id="SM00079">
    <property type="entry name" value="PBPe"/>
    <property type="match status" value="1"/>
</dbReference>
<dbReference type="SUPFAM" id="SSF53822">
    <property type="entry name" value="Periplasmic binding protein-like I"/>
    <property type="match status" value="1"/>
</dbReference>
<dbReference type="SUPFAM" id="SSF53850">
    <property type="entry name" value="Periplasmic binding protein-like II"/>
    <property type="match status" value="1"/>
</dbReference>
<proteinExistence type="evidence at protein level"/>
<protein>
    <recommendedName>
        <fullName>Glutamate receptor ionotropic, kainate 2</fullName>
        <shortName>GluK2</shortName>
    </recommendedName>
    <alternativeName>
        <fullName>Excitatory amino acid receptor 4</fullName>
        <shortName>EAA4</shortName>
    </alternativeName>
    <alternativeName>
        <fullName>Glutamate receptor 6</fullName>
        <shortName>GluR-6</shortName>
        <shortName>GluR6</shortName>
    </alternativeName>
</protein>
<feature type="signal peptide" evidence="3">
    <location>
        <begin position="1"/>
        <end position="31"/>
    </location>
</feature>
<feature type="chain" id="PRO_0000011544" description="Glutamate receptor ionotropic, kainate 2">
    <location>
        <begin position="32"/>
        <end position="908"/>
    </location>
</feature>
<feature type="topological domain" description="Extracellular" evidence="2">
    <location>
        <begin position="32"/>
        <end position="561"/>
    </location>
</feature>
<feature type="transmembrane region" description="Helical" evidence="3">
    <location>
        <begin position="562"/>
        <end position="582"/>
    </location>
</feature>
<feature type="topological domain" description="Cytoplasmic" evidence="2">
    <location>
        <begin position="583"/>
        <end position="635"/>
    </location>
</feature>
<feature type="transmembrane region" description="Helical" evidence="3">
    <location>
        <begin position="636"/>
        <end position="656"/>
    </location>
</feature>
<feature type="topological domain" description="Extracellular" evidence="2">
    <location>
        <begin position="657"/>
        <end position="819"/>
    </location>
</feature>
<feature type="transmembrane region" description="Helical" evidence="3">
    <location>
        <begin position="820"/>
        <end position="840"/>
    </location>
</feature>
<feature type="topological domain" description="Cytoplasmic" evidence="2">
    <location>
        <begin position="841"/>
        <end position="908"/>
    </location>
</feature>
<feature type="binding site" evidence="9 22">
    <location>
        <position position="516"/>
    </location>
    <ligand>
        <name>L-glutamate</name>
        <dbReference type="ChEBI" id="CHEBI:29985"/>
    </ligand>
</feature>
<feature type="binding site" evidence="9 22">
    <location>
        <position position="518"/>
    </location>
    <ligand>
        <name>L-glutamate</name>
        <dbReference type="ChEBI" id="CHEBI:29985"/>
    </ligand>
</feature>
<feature type="binding site" evidence="9 22">
    <location>
        <position position="523"/>
    </location>
    <ligand>
        <name>L-glutamate</name>
        <dbReference type="ChEBI" id="CHEBI:29985"/>
    </ligand>
</feature>
<feature type="binding site" evidence="9 22">
    <location>
        <position position="689"/>
    </location>
    <ligand>
        <name>L-glutamate</name>
        <dbReference type="ChEBI" id="CHEBI:29985"/>
    </ligand>
</feature>
<feature type="binding site" evidence="9 22">
    <location>
        <position position="690"/>
    </location>
    <ligand>
        <name>L-glutamate</name>
        <dbReference type="ChEBI" id="CHEBI:29985"/>
    </ligand>
</feature>
<feature type="binding site" evidence="9 22">
    <location>
        <position position="738"/>
    </location>
    <ligand>
        <name>L-glutamate</name>
        <dbReference type="ChEBI" id="CHEBI:29985"/>
    </ligand>
</feature>
<feature type="modified residue" description="Phosphoserine; by PKC" evidence="10">
    <location>
        <position position="846"/>
    </location>
</feature>
<feature type="modified residue" description="Phosphoserine; by PKC" evidence="10">
    <location>
        <position position="868"/>
    </location>
</feature>
<feature type="glycosylation site" description="N-linked (GlcNAc...) asparagine" evidence="3">
    <location>
        <position position="67"/>
    </location>
</feature>
<feature type="glycosylation site" description="N-linked (GlcNAc...) asparagine" evidence="3">
    <location>
        <position position="73"/>
    </location>
</feature>
<feature type="glycosylation site" description="N-linked (GlcNAc...) asparagine" evidence="3">
    <location>
        <position position="275"/>
    </location>
</feature>
<feature type="glycosylation site" description="N-linked (GlcNAc...) asparagine" evidence="3">
    <location>
        <position position="378"/>
    </location>
</feature>
<feature type="glycosylation site" description="N-linked (GlcNAc...) asparagine" evidence="3">
    <location>
        <position position="412"/>
    </location>
</feature>
<feature type="glycosylation site" description="N-linked (GlcNAc...) asparagine" evidence="3">
    <location>
        <position position="423"/>
    </location>
</feature>
<feature type="glycosylation site" description="N-linked (GlcNAc...) asparagine" evidence="3">
    <location>
        <position position="430"/>
    </location>
</feature>
<feature type="glycosylation site" description="N-linked (GlcNAc...) asparagine" evidence="3">
    <location>
        <position position="546"/>
    </location>
</feature>
<feature type="glycosylation site" description="N-linked (GlcNAc...) asparagine" evidence="3">
    <location>
        <position position="751"/>
    </location>
</feature>
<feature type="disulfide bond" evidence="2">
    <location>
        <begin position="96"/>
        <end position="347"/>
    </location>
</feature>
<feature type="disulfide bond" evidence="9">
    <location>
        <begin position="750"/>
        <end position="804"/>
    </location>
</feature>
<feature type="cross-link" description="Glycyl lysine isopeptide (Lys-Gly) (interchain with G-Cter in SUMO1)" evidence="10">
    <location>
        <position position="886"/>
    </location>
</feature>
<feature type="splice variant" id="VSP_044388" description="In isoform 6." evidence="19">
    <location>
        <begin position="509"/>
        <end position="695"/>
    </location>
</feature>
<feature type="splice variant" id="VSP_044389" description="In isoform 7." evidence="19">
    <location>
        <begin position="510"/>
        <end position="714"/>
    </location>
</feature>
<feature type="splice variant" id="VSP_022334" description="In isoform 4." evidence="18">
    <location>
        <begin position="547"/>
        <end position="622"/>
    </location>
</feature>
<feature type="splice variant" id="VSP_022337" description="In isoform 3." evidence="18">
    <location>
        <begin position="585"/>
        <end position="908"/>
    </location>
</feature>
<feature type="splice variant" id="VSP_022335" description="In isoform 2 and isoform 6." evidence="18 19">
    <original>RSFCSAMVEELRMSLKCQRRLKHKPQAPVIVKTEEVINMHTFNDRRLPGKETMA</original>
    <variation>ESSIWLVPPYHPDTV</variation>
    <location>
        <begin position="855"/>
        <end position="908"/>
    </location>
</feature>
<feature type="splice variant" id="VSP_022336" description="In isoform 5 and isoform 7." evidence="19 20">
    <original>SFCSAMVEELRMSLKCQRRLKHKPQAPVIVKTEEVINMHTFNDRRLPGKETMA</original>
    <variation>AKTKLPQDYVFLPILESVSISTVLSSSPSSSSLSSCS</variation>
    <location>
        <begin position="856"/>
        <end position="908"/>
    </location>
</feature>
<feature type="sequence variant" id="VAR_035694" description="In a breast cancer sample; somatic mutation." evidence="6">
    <original>E</original>
    <variation>Q</variation>
    <location>
        <position position="187"/>
    </location>
</feature>
<feature type="sequence variant" id="VAR_000305" description="In RNA edited version.">
    <original>I</original>
    <variation>V</variation>
    <location>
        <position position="567"/>
    </location>
</feature>
<feature type="sequence variant" id="VAR_000306" description="In RNA edited version.">
    <original>Y</original>
    <variation>C</variation>
    <location>
        <position position="571"/>
    </location>
</feature>
<feature type="sequence variant" id="VAR_000307" description="In RNA edited version.">
    <original>Q</original>
    <variation>R</variation>
    <location>
        <position position="621"/>
    </location>
</feature>
<feature type="sequence variant" id="VAR_078426" description="In NEDLAS; gain of function; when incorporated into kainate receptor, produces constitutively active channels with significantly altered gating kinetics; may decrease cell surface expression; dbSNP:rs1790057505." evidence="11 13">
    <original>A</original>
    <variation>T</variation>
    <location>
        <position position="657"/>
    </location>
</feature>
<feature type="sequence variant" id="VAR_086335" description="In NEDLAS; causes profound slowing of channel deactivation and constitutive tonic current activation compared to wild-type, indicating altered channel gating kinetics; may decrease cell surface expression." evidence="13">
    <original>T</original>
    <variation>K</variation>
    <location>
        <position position="660"/>
    </location>
</feature>
<feature type="sequence variant" id="VAR_086336" description="In NEDLAS; causes profound slowing of channel deactivation and constitutive tonic current activation compared to wild-type, indicating altered channel gating kinetics; may decrease cell surface expression." evidence="13">
    <original>T</original>
    <variation>R</variation>
    <location>
        <position position="660"/>
    </location>
</feature>
<feature type="sequence variant" id="VAR_086337" description="In NEDLAS; causes markedly reduced peak current amplitudes and very fast gating kinetics; no effect on homomeric receptor localization to the plasma membrane when expressed in heterologous cells." evidence="13">
    <original>I</original>
    <variation>T</variation>
    <location>
        <position position="668"/>
    </location>
</feature>
<feature type="sequence variant" id="VAR_049186" description="In dbSNP:rs3213608.">
    <original>V</original>
    <variation>I</variation>
    <location>
        <position position="766"/>
    </location>
</feature>
<feature type="sequence variant" id="VAR_037633" description="In dbSNP:rs2235076." evidence="11">
    <original>M</original>
    <variation>I</variation>
    <location>
        <position position="867"/>
    </location>
</feature>
<feature type="sequence conflict" description="In Ref. 3; CAC81020 and 5; ADH93570/ADH93571/ADH93572/ADH93573." evidence="21" ref="3 5">
    <original>L</original>
    <variation>P</variation>
    <location>
        <position position="20"/>
    </location>
</feature>
<feature type="sequence conflict" description="In Ref. 2." evidence="21" ref="2">
    <original>G</original>
    <variation>S</variation>
    <location>
        <position position="789"/>
    </location>
</feature>
<feature type="strand" evidence="23">
    <location>
        <begin position="433"/>
        <end position="437"/>
    </location>
</feature>
<feature type="turn" evidence="23">
    <location>
        <begin position="441"/>
        <end position="443"/>
    </location>
</feature>
<feature type="strand" evidence="23">
    <location>
        <begin position="444"/>
        <end position="446"/>
    </location>
</feature>
<feature type="helix" evidence="23">
    <location>
        <begin position="455"/>
        <end position="458"/>
    </location>
</feature>
<feature type="strand" evidence="23">
    <location>
        <begin position="459"/>
        <end position="461"/>
    </location>
</feature>
<feature type="helix" evidence="23">
    <location>
        <begin position="462"/>
        <end position="474"/>
    </location>
</feature>
<feature type="strand" evidence="23">
    <location>
        <begin position="478"/>
        <end position="482"/>
    </location>
</feature>
<feature type="turn" evidence="23">
    <location>
        <begin position="493"/>
        <end position="495"/>
    </location>
</feature>
<feature type="helix" evidence="23">
    <location>
        <begin position="500"/>
        <end position="506"/>
    </location>
</feature>
<feature type="strand" evidence="23">
    <location>
        <begin position="511"/>
        <end position="513"/>
    </location>
</feature>
<feature type="helix" evidence="23">
    <location>
        <begin position="521"/>
        <end position="524"/>
    </location>
</feature>
<feature type="strand" evidence="23">
    <location>
        <begin position="527"/>
        <end position="529"/>
    </location>
</feature>
<feature type="strand" evidence="23">
    <location>
        <begin position="533"/>
        <end position="536"/>
    </location>
</feature>
<feature type="strand" evidence="23">
    <location>
        <begin position="538"/>
        <end position="544"/>
    </location>
</feature>
<feature type="helix" evidence="23">
    <location>
        <begin position="671"/>
        <end position="675"/>
    </location>
</feature>
<feature type="strand" evidence="23">
    <location>
        <begin position="678"/>
        <end position="683"/>
    </location>
</feature>
<feature type="helix" evidence="23">
    <location>
        <begin position="689"/>
        <end position="696"/>
    </location>
</feature>
<feature type="helix" evidence="23">
    <location>
        <begin position="700"/>
        <end position="711"/>
    </location>
</feature>
<feature type="helix" evidence="23">
    <location>
        <begin position="713"/>
        <end position="716"/>
    </location>
</feature>
<feature type="strand" evidence="23">
    <location>
        <begin position="718"/>
        <end position="720"/>
    </location>
</feature>
<feature type="helix" evidence="23">
    <location>
        <begin position="721"/>
        <end position="730"/>
    </location>
</feature>
<feature type="strand" evidence="23">
    <location>
        <begin position="731"/>
        <end position="738"/>
    </location>
</feature>
<feature type="helix" evidence="23">
    <location>
        <begin position="739"/>
        <end position="748"/>
    </location>
</feature>
<feature type="strand" evidence="23">
    <location>
        <begin position="752"/>
        <end position="757"/>
    </location>
</feature>
<feature type="strand" evidence="23">
    <location>
        <begin position="762"/>
        <end position="764"/>
    </location>
</feature>
<feature type="strand" evidence="23">
    <location>
        <begin position="767"/>
        <end position="769"/>
    </location>
</feature>
<feature type="helix" evidence="23">
    <location>
        <begin position="774"/>
        <end position="787"/>
    </location>
</feature>
<feature type="helix" evidence="23">
    <location>
        <begin position="790"/>
        <end position="799"/>
    </location>
</feature>
<comment type="function">
    <text evidence="1 5 11 13 15 17">Ionotropic glutamate receptor that functions as a cation permeable ligand-gated ion channel, gated by L-glutamate and the glutamatergic agonist kainic acid. L-glutamate acts as an excitatory neurotransmitter at many synapses in the central nervous system. Binding of the excitatory neurotransmitter L-glutamate induces a conformation change, leading to the opening of the cation channel, and thereby converts the chemical signal to an electrical impulse. The receptor then desensitizes rapidly and enters a transient inactive state, characterized by the presence of bound agonist (PubMed:14511640, PubMed:28180184, PubMed:34375587, PubMed:7536611, PubMed:8730589). Modulates cell surface expression of NETO2. In association with GRIK3, involved in presynaptic facilitation of glutamate release at hippocampal mossy fiber synapses (By similarity).</text>
</comment>
<comment type="function">
    <text evidence="1 12">Independent of its ionotropic glutamate receptor activity, acts as a thermoreceptor conferring sensitivity to cold temperatures (PubMed:31474366). Functions in dorsal root ganglion neurons (By similarity).</text>
</comment>
<comment type="catalytic activity">
    <reaction evidence="15">
        <text>Ca(2+)(in) = Ca(2+)(out)</text>
        <dbReference type="Rhea" id="RHEA:29671"/>
        <dbReference type="ChEBI" id="CHEBI:29108"/>
    </reaction>
</comment>
<comment type="catalytic activity">
    <reaction evidence="15">
        <text>Na(+)(in) = Na(+)(out)</text>
        <dbReference type="Rhea" id="RHEA:34963"/>
        <dbReference type="ChEBI" id="CHEBI:29101"/>
    </reaction>
</comment>
<comment type="activity regulation">
    <text evidence="12">Cold receptor activity activated by temperatures between 10-19 degrees Celsius.</text>
</comment>
<comment type="subunit">
    <text evidence="1 2 4 17">Homotetramer and heterotetramer with GRIK5. Tetramers may be formed by the dimerization of dimers. Assembles into a kainate-gated homomeric channel that does not bind AMPA (By similarity). Can form functional heteromeric receptors with GRIK5 (PubMed:8730589). Can form functional heteromeric receptors with GRIK3 and GRIK4 (By similarity). Interacts with DLG4 (PubMed:11744724). Interacts with NETO2 (By similarity). Interacts (via C-terminus) with KLHL17 (via kelch repeats); the interaction targets GRIK2 for degradation via ubiquitin-proteasome pathway (By similarity).</text>
</comment>
<comment type="subcellular location">
    <subcellularLocation>
        <location evidence="5 13">Cell membrane</location>
        <topology evidence="3">Multi-pass membrane protein</topology>
    </subcellularLocation>
    <subcellularLocation>
        <location evidence="2">Postsynaptic cell membrane</location>
        <topology evidence="3">Multi-pass membrane protein</topology>
    </subcellularLocation>
</comment>
<comment type="alternative products">
    <event type="alternative splicing"/>
    <isoform>
        <id>Q13002-1</id>
        <name>1</name>
        <name>A</name>
        <sequence type="displayed"/>
    </isoform>
    <isoform>
        <id>Q13002-2</id>
        <name>2</name>
        <name>B</name>
        <sequence type="described" ref="VSP_022335"/>
    </isoform>
    <isoform>
        <id>Q13002-3</id>
        <name>3</name>
        <sequence type="described" ref="VSP_022337"/>
    </isoform>
    <isoform>
        <id>Q13002-4</id>
        <name>4</name>
        <sequence type="described" ref="VSP_022334"/>
    </isoform>
    <isoform>
        <id>Q13002-5</id>
        <name>5</name>
        <name>C</name>
        <sequence type="described" ref="VSP_022336"/>
    </isoform>
    <isoform>
        <id>Q13002-6</id>
        <name>6</name>
        <name>D</name>
        <sequence type="described" ref="VSP_044388 VSP_022335"/>
    </isoform>
    <isoform>
        <id>Q13002-7</id>
        <name>7</name>
        <name>E</name>
        <sequence type="described" ref="VSP_044389 VSP_022336"/>
    </isoform>
</comment>
<comment type="tissue specificity">
    <text evidence="8">Expression is higher in cerebellum than in cerebral cortex.</text>
</comment>
<comment type="PTM">
    <text evidence="2">Sumoylation mediates kainate receptor-mediated endocytosis and regulates synaptic transmission. Sumoylation is enhanced by PIAS3 and desumoylated by SENP1 (By similarity).</text>
</comment>
<comment type="PTM">
    <text evidence="2">Ubiquitinated. Ubiquitination regulates the GRIK2 levels at the synapse by leading kainate receptor degradation through proteasome (By similarity).</text>
</comment>
<comment type="PTM">
    <text evidence="10">Phosphorylated by PKC at Ser-868 upon agonist activation, this directly enhance sumoylation.</text>
</comment>
<comment type="RNA editing">
    <location>
        <position position="567" evidence="16"/>
    </location>
    <location>
        <position position="571" evidence="16"/>
    </location>
    <location>
        <position position="621" evidence="14 16"/>
    </location>
    <text evidence="2 17">Partially edited. The presence of Gln at position 621 (non-edited) determines channels with low calcium permeability, whereas Arg (edited) determines a higher calcium permeability especially if the preceding sites are fully edited. This receptor is nearly completely edited in all gray matter structures (90% of the receptors), whereas much less edited in the white matter (10% of the receptors) (By similarity). The unedited version (Q) assembles into a functional kainate-gated homomeric channel, whereas the edited version (R) is unable to produce channel activity when expressed alone (PubMed:8730589).</text>
</comment>
<comment type="disease" evidence="7">
    <disease id="DI-01245">
        <name>Intellectual developmental disorder, autosomal recessive 6</name>
        <acronym>MRT6</acronym>
        <description>A disorder characterized by significantly below average general intellectual functioning associated with impairments in adaptive behavior and manifested during the developmental period. MRT6 patients display mild to severe intellectual disability and psychomotor development delay in early childhood. Patients do not have neurologic problems, congenital malformations, or facial dysmorphism. Body height, weight, and head circumference are normal.</description>
        <dbReference type="MIM" id="611092"/>
    </disease>
    <text>The disease is caused by variants affecting the gene represented in this entry.</text>
</comment>
<comment type="disease" evidence="11 13">
    <disease id="DI-06241">
        <name>Neurodevelopmental disorder with impaired language and ataxia and with or without seizures</name>
        <acronym>NEDLAS</acronym>
        <description>An autosomal dominant disorder characterized by axial hypotonia and global developmental delay. Affected individuals show impaired intellectual development, delayed walking, poor speech, and behavioral abnormalities. Some patients have a more severe phenotype with early-onset seizures resembling epileptic encephalopathy, inability to walk or speak, and hypomyelination on brain imaging.</description>
        <dbReference type="MIM" id="619580"/>
    </disease>
    <text>The disease is caused by variants affecting the gene represented in this entry.</text>
</comment>
<comment type="miscellaneous">
    <text evidence="15">The postsynaptic actions of Glu are mediated by a variety of receptors that are named according to their selective agonists. This receptor binds domoate &gt; kainate &gt; quisqualate &gt; 6-cyano-7-nitroquinoxaline-2,3-dione &gt; L-glutamate = 6,7-dinitroquinoxaline-2,3-dione &gt; dihydrokainate.</text>
</comment>
<comment type="similarity">
    <text evidence="21">Belongs to the glutamate-gated ion channel (TC 1.A.10.1) family. GRIK2 subfamily.</text>
</comment>
<sequence length="908" mass="102583">MKIIFPILSNPVFRRTVKLLLCLLWIGYSQGTTHVLRFGGIFEYVESGPMGAEELAFRFAVNTINRNRTLLPNTTLTYDTQKINLYDSFEASKKACDQLSLGVAAIFGPSHSSSANAVQSICNALGVPHIQTRWKHQVSDNKDSFYVSLYPDFSSLSRAILDLVQFFKWKTVTVVYDDSTGLIRLQELIKAPSRYNLRLKIRQLPADTKDAKPLLKEMKRGKEFHVIFDCSHEMAAGILKQALAMGMMTEYYHYIFTTLDLFALDVEPYRYSGVNMTGFRILNTENTQVSSIIEKWSMERLQAPPKPDSGLLDGFMTTDAALMYDAVHVVSVAVQQFPQMTVSSLQCNRHKPWRFGTRFMSLIKEAHWEGLTGRITFNKTNGLRTDFDLDVISLKEEGLEKIGTWDPASGLNMTESQKGKPANITDSLSNRSLIVTTILEEPYVLFKKSDKPLYGNDRFEGYCIDLLRELSTILGFTYEIRLVEDGKYGAQDDANGQWNGMVRELIDHKADLAVAPLAITYVREKVIDFSKPFMTLGISILYRKPNGTNPGVFSFLNPLSPDIWMYILLAYLGVSCVLFVIARFSPYEWYNPHPCNPDSDVVENNFTLLNSFWFGVGALMQQGSELMPKALSTRIVGGIWWFFTLIIISSYTANLAAFLTVERMESPIDSADDLAKQTKIEYGAVEDGATMTFFKKSKISTYDKMWAFMSSRRQSVLVKSNEEGIQRVLTSDYAFLMESTTIEFVTQRNCNLTQIGGLIDSKGYGVGTPMGSPYRDKITIAILQLQEEGKLHMMKEKWWRGNGCPEEESKEASALGVQNIGGIFIVLAAGLVLSVFVAVGEFLYKSKKNAQLEKRSFCSAMVEELRMSLKCQRRLKHKPQAPVIVKTEEVINMHTFNDRRLPGKETMA</sequence>